<name>CMOA_ECOL6</name>
<gene>
    <name evidence="1" type="primary">cmoA</name>
    <name type="ordered locus">c2284</name>
</gene>
<dbReference type="EC" id="2.1.3.-" evidence="1"/>
<dbReference type="EMBL" id="AE014075">
    <property type="protein sequence ID" value="AAN80741.1"/>
    <property type="molecule type" value="Genomic_DNA"/>
</dbReference>
<dbReference type="PIR" id="D90951">
    <property type="entry name" value="D90951"/>
</dbReference>
<dbReference type="PIR" id="H85799">
    <property type="entry name" value="H85799"/>
</dbReference>
<dbReference type="RefSeq" id="WP_000019588.1">
    <property type="nucleotide sequence ID" value="NZ_CP051263.1"/>
</dbReference>
<dbReference type="SMR" id="Q8FGQ6"/>
<dbReference type="STRING" id="199310.c2284"/>
<dbReference type="GeneID" id="75202724"/>
<dbReference type="KEGG" id="ecc:c2284"/>
<dbReference type="eggNOG" id="COG2226">
    <property type="taxonomic scope" value="Bacteria"/>
</dbReference>
<dbReference type="HOGENOM" id="CLU_078475_0_0_6"/>
<dbReference type="BioCyc" id="ECOL199310:C2284-MONOMER"/>
<dbReference type="Proteomes" id="UP000001410">
    <property type="component" value="Chromosome"/>
</dbReference>
<dbReference type="GO" id="GO:0016743">
    <property type="term" value="F:carboxyl- or carbamoyltransferase activity"/>
    <property type="evidence" value="ECO:0007669"/>
    <property type="project" value="UniProtKB-UniRule"/>
</dbReference>
<dbReference type="GO" id="GO:1904047">
    <property type="term" value="F:S-adenosyl-L-methionine binding"/>
    <property type="evidence" value="ECO:0007669"/>
    <property type="project" value="UniProtKB-UniRule"/>
</dbReference>
<dbReference type="GO" id="GO:0002098">
    <property type="term" value="P:tRNA wobble uridine modification"/>
    <property type="evidence" value="ECO:0007669"/>
    <property type="project" value="InterPro"/>
</dbReference>
<dbReference type="CDD" id="cd02440">
    <property type="entry name" value="AdoMet_MTases"/>
    <property type="match status" value="1"/>
</dbReference>
<dbReference type="FunFam" id="3.40.50.150:FF:000030">
    <property type="entry name" value="Carboxy-S-adenosyl-L-methionine synthase"/>
    <property type="match status" value="1"/>
</dbReference>
<dbReference type="Gene3D" id="3.40.50.150">
    <property type="entry name" value="Vaccinia Virus protein VP39"/>
    <property type="match status" value="1"/>
</dbReference>
<dbReference type="HAMAP" id="MF_01589">
    <property type="entry name" value="Cx_SAM_synthase"/>
    <property type="match status" value="1"/>
</dbReference>
<dbReference type="InterPro" id="IPR005271">
    <property type="entry name" value="CmoA"/>
</dbReference>
<dbReference type="InterPro" id="IPR041698">
    <property type="entry name" value="Methyltransf_25"/>
</dbReference>
<dbReference type="InterPro" id="IPR029063">
    <property type="entry name" value="SAM-dependent_MTases_sf"/>
</dbReference>
<dbReference type="NCBIfam" id="TIGR00740">
    <property type="entry name" value="carboxy-S-adenosyl-L-methionine synthase CmoA"/>
    <property type="match status" value="1"/>
</dbReference>
<dbReference type="NCBIfam" id="NF011995">
    <property type="entry name" value="PRK15451.1"/>
    <property type="match status" value="1"/>
</dbReference>
<dbReference type="PANTHER" id="PTHR43861:SF2">
    <property type="entry name" value="CARBOXY-S-ADENOSYL-L-METHIONINE SYNTHASE"/>
    <property type="match status" value="1"/>
</dbReference>
<dbReference type="PANTHER" id="PTHR43861">
    <property type="entry name" value="TRANS-ACONITATE 2-METHYLTRANSFERASE-RELATED"/>
    <property type="match status" value="1"/>
</dbReference>
<dbReference type="Pfam" id="PF13649">
    <property type="entry name" value="Methyltransf_25"/>
    <property type="match status" value="1"/>
</dbReference>
<dbReference type="PIRSF" id="PIRSF006325">
    <property type="entry name" value="MeTrfase_bac"/>
    <property type="match status" value="1"/>
</dbReference>
<dbReference type="SUPFAM" id="SSF53335">
    <property type="entry name" value="S-adenosyl-L-methionine-dependent methyltransferases"/>
    <property type="match status" value="1"/>
</dbReference>
<comment type="function">
    <text evidence="1">Catalyzes the conversion of S-adenosyl-L-methionine (SAM) to carboxy-S-adenosyl-L-methionine (Cx-SAM).</text>
</comment>
<comment type="catalytic activity">
    <reaction evidence="1">
        <text>prephenate + S-adenosyl-L-methionine = carboxy-S-adenosyl-L-methionine + 3-phenylpyruvate + H2O</text>
        <dbReference type="Rhea" id="RHEA:51692"/>
        <dbReference type="ChEBI" id="CHEBI:15377"/>
        <dbReference type="ChEBI" id="CHEBI:18005"/>
        <dbReference type="ChEBI" id="CHEBI:29934"/>
        <dbReference type="ChEBI" id="CHEBI:59789"/>
        <dbReference type="ChEBI" id="CHEBI:134278"/>
    </reaction>
</comment>
<comment type="subunit">
    <text evidence="1">Homodimer.</text>
</comment>
<comment type="similarity">
    <text evidence="1">Belongs to the class I-like SAM-binding methyltransferase superfamily. Cx-SAM synthase family.</text>
</comment>
<feature type="chain" id="PRO_0000314329" description="Carboxy-S-adenosyl-L-methionine synthase">
    <location>
        <begin position="1"/>
        <end position="247"/>
    </location>
</feature>
<feature type="binding site" evidence="1">
    <location>
        <position position="39"/>
    </location>
    <ligand>
        <name>S-adenosyl-L-methionine</name>
        <dbReference type="ChEBI" id="CHEBI:59789"/>
    </ligand>
</feature>
<feature type="binding site" evidence="1">
    <location>
        <begin position="64"/>
        <end position="66"/>
    </location>
    <ligand>
        <name>S-adenosyl-L-methionine</name>
        <dbReference type="ChEBI" id="CHEBI:59789"/>
    </ligand>
</feature>
<feature type="binding site" evidence="1">
    <location>
        <begin position="89"/>
        <end position="90"/>
    </location>
    <ligand>
        <name>S-adenosyl-L-methionine</name>
        <dbReference type="ChEBI" id="CHEBI:59789"/>
    </ligand>
</feature>
<feature type="binding site" evidence="1">
    <location>
        <begin position="117"/>
        <end position="118"/>
    </location>
    <ligand>
        <name>S-adenosyl-L-methionine</name>
        <dbReference type="ChEBI" id="CHEBI:59789"/>
    </ligand>
</feature>
<feature type="binding site" evidence="1">
    <location>
        <position position="132"/>
    </location>
    <ligand>
        <name>S-adenosyl-L-methionine</name>
        <dbReference type="ChEBI" id="CHEBI:59789"/>
    </ligand>
</feature>
<feature type="binding site" evidence="1">
    <location>
        <position position="199"/>
    </location>
    <ligand>
        <name>S-adenosyl-L-methionine</name>
        <dbReference type="ChEBI" id="CHEBI:59789"/>
    </ligand>
</feature>
<evidence type="ECO:0000255" key="1">
    <source>
        <dbReference type="HAMAP-Rule" id="MF_01589"/>
    </source>
</evidence>
<accession>Q8FGQ6</accession>
<keyword id="KW-1185">Reference proteome</keyword>
<keyword id="KW-0949">S-adenosyl-L-methionine</keyword>
<keyword id="KW-0808">Transferase</keyword>
<organism>
    <name type="scientific">Escherichia coli O6:H1 (strain CFT073 / ATCC 700928 / UPEC)</name>
    <dbReference type="NCBI Taxonomy" id="199310"/>
    <lineage>
        <taxon>Bacteria</taxon>
        <taxon>Pseudomonadati</taxon>
        <taxon>Pseudomonadota</taxon>
        <taxon>Gammaproteobacteria</taxon>
        <taxon>Enterobacterales</taxon>
        <taxon>Enterobacteriaceae</taxon>
        <taxon>Escherichia</taxon>
    </lineage>
</organism>
<sequence length="247" mass="27791">MSHRDTLFSAPIARLGDWTFDERVAEVFPDMIQRSVPGYSNIISMIGMLAERFVQPGTQVYDLGCSLGAATLSVRRNIHHDNCKIIAIDNSPAMIERCRRHIDAYKAPTPVDVIEGDIRDIAIENASMVVLNFTLQFLEPSERQALLDKIYQGLNPGGALVLSEKFSFEDAKVGELLFNMHHDFKRANGYSELEISQKRSMLENVMLTDSVETHKARLHKAGFEHSELWFQCFNFGSLVALKAEDAA</sequence>
<protein>
    <recommendedName>
        <fullName evidence="1">Carboxy-S-adenosyl-L-methionine synthase</fullName>
        <shortName evidence="1">Cx-SAM synthase</shortName>
        <ecNumber evidence="1">2.1.3.-</ecNumber>
    </recommendedName>
</protein>
<reference key="1">
    <citation type="journal article" date="2002" name="Proc. Natl. Acad. Sci. U.S.A.">
        <title>Extensive mosaic structure revealed by the complete genome sequence of uropathogenic Escherichia coli.</title>
        <authorList>
            <person name="Welch R.A."/>
            <person name="Burland V."/>
            <person name="Plunkett G. III"/>
            <person name="Redford P."/>
            <person name="Roesch P."/>
            <person name="Rasko D."/>
            <person name="Buckles E.L."/>
            <person name="Liou S.-R."/>
            <person name="Boutin A."/>
            <person name="Hackett J."/>
            <person name="Stroud D."/>
            <person name="Mayhew G.F."/>
            <person name="Rose D.J."/>
            <person name="Zhou S."/>
            <person name="Schwartz D.C."/>
            <person name="Perna N.T."/>
            <person name="Mobley H.L.T."/>
            <person name="Donnenberg M.S."/>
            <person name="Blattner F.R."/>
        </authorList>
    </citation>
    <scope>NUCLEOTIDE SEQUENCE [LARGE SCALE GENOMIC DNA]</scope>
    <source>
        <strain>CFT073 / ATCC 700928 / UPEC</strain>
    </source>
</reference>
<proteinExistence type="inferred from homology"/>